<sequence length="182" mass="20071">MSTSSSSSWDNLLESLSLSTVWNWIQASFLGETSAPQQTSLGLLDNLAPAVQIILRISFLILLGIGIYALWKRSIQSIQKTLLFVITLYKLYKKGSHIFEALLANPEGSGLRIQDNNNLFLSLGLQEKILKKLKTVENKMKNLEGIIVAQKPATKRDCSSEPYCSCSDCQSPLSTSGFTSPI</sequence>
<evidence type="ECO:0000255" key="1"/>
<evidence type="ECO:0000305" key="2"/>
<accession>Q7Z6W1</accession>
<organism>
    <name type="scientific">Homo sapiens</name>
    <name type="common">Human</name>
    <dbReference type="NCBI Taxonomy" id="9606"/>
    <lineage>
        <taxon>Eukaryota</taxon>
        <taxon>Metazoa</taxon>
        <taxon>Chordata</taxon>
        <taxon>Craniata</taxon>
        <taxon>Vertebrata</taxon>
        <taxon>Euteleostomi</taxon>
        <taxon>Mammalia</taxon>
        <taxon>Eutheria</taxon>
        <taxon>Euarchontoglires</taxon>
        <taxon>Primates</taxon>
        <taxon>Haplorrhini</taxon>
        <taxon>Catarrhini</taxon>
        <taxon>Hominidae</taxon>
        <taxon>Homo</taxon>
    </lineage>
</organism>
<reference key="1">
    <citation type="journal article" date="2006" name="Nature">
        <title>The DNA sequence and biological annotation of human chromosome 1.</title>
        <authorList>
            <person name="Gregory S.G."/>
            <person name="Barlow K.F."/>
            <person name="McLay K.E."/>
            <person name="Kaul R."/>
            <person name="Swarbreck D."/>
            <person name="Dunham A."/>
            <person name="Scott C.E."/>
            <person name="Howe K.L."/>
            <person name="Woodfine K."/>
            <person name="Spencer C.C.A."/>
            <person name="Jones M.C."/>
            <person name="Gillson C."/>
            <person name="Searle S."/>
            <person name="Zhou Y."/>
            <person name="Kokocinski F."/>
            <person name="McDonald L."/>
            <person name="Evans R."/>
            <person name="Phillips K."/>
            <person name="Atkinson A."/>
            <person name="Cooper R."/>
            <person name="Jones C."/>
            <person name="Hall R.E."/>
            <person name="Andrews T.D."/>
            <person name="Lloyd C."/>
            <person name="Ainscough R."/>
            <person name="Almeida J.P."/>
            <person name="Ambrose K.D."/>
            <person name="Anderson F."/>
            <person name="Andrew R.W."/>
            <person name="Ashwell R.I.S."/>
            <person name="Aubin K."/>
            <person name="Babbage A.K."/>
            <person name="Bagguley C.L."/>
            <person name="Bailey J."/>
            <person name="Beasley H."/>
            <person name="Bethel G."/>
            <person name="Bird C.P."/>
            <person name="Bray-Allen S."/>
            <person name="Brown J.Y."/>
            <person name="Brown A.J."/>
            <person name="Buckley D."/>
            <person name="Burton J."/>
            <person name="Bye J."/>
            <person name="Carder C."/>
            <person name="Chapman J.C."/>
            <person name="Clark S.Y."/>
            <person name="Clarke G."/>
            <person name="Clee C."/>
            <person name="Cobley V."/>
            <person name="Collier R.E."/>
            <person name="Corby N."/>
            <person name="Coville G.J."/>
            <person name="Davies J."/>
            <person name="Deadman R."/>
            <person name="Dunn M."/>
            <person name="Earthrowl M."/>
            <person name="Ellington A.G."/>
            <person name="Errington H."/>
            <person name="Frankish A."/>
            <person name="Frankland J."/>
            <person name="French L."/>
            <person name="Garner P."/>
            <person name="Garnett J."/>
            <person name="Gay L."/>
            <person name="Ghori M.R.J."/>
            <person name="Gibson R."/>
            <person name="Gilby L.M."/>
            <person name="Gillett W."/>
            <person name="Glithero R.J."/>
            <person name="Grafham D.V."/>
            <person name="Griffiths C."/>
            <person name="Griffiths-Jones S."/>
            <person name="Grocock R."/>
            <person name="Hammond S."/>
            <person name="Harrison E.S.I."/>
            <person name="Hart E."/>
            <person name="Haugen E."/>
            <person name="Heath P.D."/>
            <person name="Holmes S."/>
            <person name="Holt K."/>
            <person name="Howden P.J."/>
            <person name="Hunt A.R."/>
            <person name="Hunt S.E."/>
            <person name="Hunter G."/>
            <person name="Isherwood J."/>
            <person name="James R."/>
            <person name="Johnson C."/>
            <person name="Johnson D."/>
            <person name="Joy A."/>
            <person name="Kay M."/>
            <person name="Kershaw J.K."/>
            <person name="Kibukawa M."/>
            <person name="Kimberley A.M."/>
            <person name="King A."/>
            <person name="Knights A.J."/>
            <person name="Lad H."/>
            <person name="Laird G."/>
            <person name="Lawlor S."/>
            <person name="Leongamornlert D.A."/>
            <person name="Lloyd D.M."/>
            <person name="Loveland J."/>
            <person name="Lovell J."/>
            <person name="Lush M.J."/>
            <person name="Lyne R."/>
            <person name="Martin S."/>
            <person name="Mashreghi-Mohammadi M."/>
            <person name="Matthews L."/>
            <person name="Matthews N.S.W."/>
            <person name="McLaren S."/>
            <person name="Milne S."/>
            <person name="Mistry S."/>
            <person name="Moore M.J.F."/>
            <person name="Nickerson T."/>
            <person name="O'Dell C.N."/>
            <person name="Oliver K."/>
            <person name="Palmeiri A."/>
            <person name="Palmer S.A."/>
            <person name="Parker A."/>
            <person name="Patel D."/>
            <person name="Pearce A.V."/>
            <person name="Peck A.I."/>
            <person name="Pelan S."/>
            <person name="Phelps K."/>
            <person name="Phillimore B.J."/>
            <person name="Plumb R."/>
            <person name="Rajan J."/>
            <person name="Raymond C."/>
            <person name="Rouse G."/>
            <person name="Saenphimmachak C."/>
            <person name="Sehra H.K."/>
            <person name="Sheridan E."/>
            <person name="Shownkeen R."/>
            <person name="Sims S."/>
            <person name="Skuce C.D."/>
            <person name="Smith M."/>
            <person name="Steward C."/>
            <person name="Subramanian S."/>
            <person name="Sycamore N."/>
            <person name="Tracey A."/>
            <person name="Tromans A."/>
            <person name="Van Helmond Z."/>
            <person name="Wall M."/>
            <person name="Wallis J.M."/>
            <person name="White S."/>
            <person name="Whitehead S.L."/>
            <person name="Wilkinson J.E."/>
            <person name="Willey D.L."/>
            <person name="Williams H."/>
            <person name="Wilming L."/>
            <person name="Wray P.W."/>
            <person name="Wu Z."/>
            <person name="Coulson A."/>
            <person name="Vaudin M."/>
            <person name="Sulston J.E."/>
            <person name="Durbin R.M."/>
            <person name="Hubbard T."/>
            <person name="Wooster R."/>
            <person name="Dunham I."/>
            <person name="Carter N.P."/>
            <person name="McVean G."/>
            <person name="Ross M.T."/>
            <person name="Harrow J."/>
            <person name="Olson M.V."/>
            <person name="Beck S."/>
            <person name="Rogers J."/>
            <person name="Bentley D.R."/>
        </authorList>
    </citation>
    <scope>NUCLEOTIDE SEQUENCE [LARGE SCALE GENOMIC DNA]</scope>
</reference>
<reference key="2">
    <citation type="journal article" date="2004" name="Genome Res.">
        <title>The status, quality, and expansion of the NIH full-length cDNA project: the Mammalian Gene Collection (MGC).</title>
        <authorList>
            <consortium name="The MGC Project Team"/>
        </authorList>
    </citation>
    <scope>NUCLEOTIDE SEQUENCE [LARGE SCALE MRNA]</scope>
    <source>
        <tissue>Brain</tissue>
    </source>
</reference>
<gene>
    <name type="primary">TMCO2</name>
</gene>
<feature type="chain" id="PRO_0000249435" description="Transmembrane and coiled-coil domain-containing protein 2">
    <location>
        <begin position="1"/>
        <end position="182"/>
    </location>
</feature>
<feature type="transmembrane region" description="Helical" evidence="1">
    <location>
        <begin position="51"/>
        <end position="71"/>
    </location>
</feature>
<feature type="coiled-coil region" evidence="1">
    <location>
        <begin position="124"/>
        <end position="151"/>
    </location>
</feature>
<name>TMCO2_HUMAN</name>
<protein>
    <recommendedName>
        <fullName>Transmembrane and coiled-coil domain-containing protein 2</fullName>
    </recommendedName>
</protein>
<dbReference type="EMBL" id="AL050341">
    <property type="status" value="NOT_ANNOTATED_CDS"/>
    <property type="molecule type" value="Genomic_DNA"/>
</dbReference>
<dbReference type="EMBL" id="BC108666">
    <property type="protein sequence ID" value="AAI08667.1"/>
    <property type="molecule type" value="mRNA"/>
</dbReference>
<dbReference type="CCDS" id="CCDS30684.1"/>
<dbReference type="RefSeq" id="NP_001008740.1">
    <property type="nucleotide sequence ID" value="NM_001008740.4"/>
</dbReference>
<dbReference type="SMR" id="Q7Z6W1"/>
<dbReference type="BioGRID" id="126055">
    <property type="interactions" value="7"/>
</dbReference>
<dbReference type="FunCoup" id="Q7Z6W1">
    <property type="interactions" value="288"/>
</dbReference>
<dbReference type="IntAct" id="Q7Z6W1">
    <property type="interactions" value="6"/>
</dbReference>
<dbReference type="STRING" id="9606.ENSP00000361852"/>
<dbReference type="iPTMnet" id="Q7Z6W1"/>
<dbReference type="PhosphoSitePlus" id="Q7Z6W1"/>
<dbReference type="BioMuta" id="TMCO2"/>
<dbReference type="DMDM" id="74750201"/>
<dbReference type="MassIVE" id="Q7Z6W1"/>
<dbReference type="PaxDb" id="9606-ENSP00000361852"/>
<dbReference type="PeptideAtlas" id="Q7Z6W1"/>
<dbReference type="ProteomicsDB" id="69468"/>
<dbReference type="Antibodypedia" id="76837">
    <property type="antibodies" value="7 antibodies from 5 providers"/>
</dbReference>
<dbReference type="DNASU" id="127391"/>
<dbReference type="Ensembl" id="ENST00000372766.4">
    <property type="protein sequence ID" value="ENSP00000361852.3"/>
    <property type="gene ID" value="ENSG00000188800.6"/>
</dbReference>
<dbReference type="GeneID" id="127391"/>
<dbReference type="KEGG" id="hsa:127391"/>
<dbReference type="MANE-Select" id="ENST00000372766.4">
    <property type="protein sequence ID" value="ENSP00000361852.3"/>
    <property type="RefSeq nucleotide sequence ID" value="NM_001008740.4"/>
    <property type="RefSeq protein sequence ID" value="NP_001008740.1"/>
</dbReference>
<dbReference type="UCSC" id="uc001cfe.3">
    <property type="organism name" value="human"/>
</dbReference>
<dbReference type="AGR" id="HGNC:23312"/>
<dbReference type="CTD" id="127391"/>
<dbReference type="DisGeNET" id="127391"/>
<dbReference type="GeneCards" id="TMCO2"/>
<dbReference type="HGNC" id="HGNC:23312">
    <property type="gene designation" value="TMCO2"/>
</dbReference>
<dbReference type="HPA" id="ENSG00000188800">
    <property type="expression patterns" value="Tissue enriched (testis)"/>
</dbReference>
<dbReference type="neXtProt" id="NX_Q7Z6W1"/>
<dbReference type="OpenTargets" id="ENSG00000188800"/>
<dbReference type="PharmGKB" id="PA142670793"/>
<dbReference type="VEuPathDB" id="HostDB:ENSG00000188800"/>
<dbReference type="eggNOG" id="ENOG502RR64">
    <property type="taxonomic scope" value="Eukaryota"/>
</dbReference>
<dbReference type="GeneTree" id="ENSGT00390000001528"/>
<dbReference type="HOGENOM" id="CLU_1598229_0_0_1"/>
<dbReference type="InParanoid" id="Q7Z6W1"/>
<dbReference type="OMA" id="WNWLQAT"/>
<dbReference type="OrthoDB" id="9450048at2759"/>
<dbReference type="PAN-GO" id="Q7Z6W1">
    <property type="GO annotations" value="0 GO annotations based on evolutionary models"/>
</dbReference>
<dbReference type="PhylomeDB" id="Q7Z6W1"/>
<dbReference type="TreeFam" id="TF337575"/>
<dbReference type="PathwayCommons" id="Q7Z6W1"/>
<dbReference type="SignaLink" id="Q7Z6W1"/>
<dbReference type="BioGRID-ORCS" id="127391">
    <property type="hits" value="12 hits in 1146 CRISPR screens"/>
</dbReference>
<dbReference type="ChiTaRS" id="TMCO2">
    <property type="organism name" value="human"/>
</dbReference>
<dbReference type="GenomeRNAi" id="127391"/>
<dbReference type="Pharos" id="Q7Z6W1">
    <property type="development level" value="Tdark"/>
</dbReference>
<dbReference type="PRO" id="PR:Q7Z6W1"/>
<dbReference type="Proteomes" id="UP000005640">
    <property type="component" value="Chromosome 1"/>
</dbReference>
<dbReference type="RNAct" id="Q7Z6W1">
    <property type="molecule type" value="protein"/>
</dbReference>
<dbReference type="Bgee" id="ENSG00000188800">
    <property type="expression patterns" value="Expressed in sperm and 99 other cell types or tissues"/>
</dbReference>
<dbReference type="ExpressionAtlas" id="Q7Z6W1">
    <property type="expression patterns" value="baseline and differential"/>
</dbReference>
<dbReference type="GO" id="GO:0016020">
    <property type="term" value="C:membrane"/>
    <property type="evidence" value="ECO:0007669"/>
    <property type="project" value="UniProtKB-SubCell"/>
</dbReference>
<dbReference type="GO" id="GO:0005634">
    <property type="term" value="C:nucleus"/>
    <property type="evidence" value="ECO:0007005"/>
    <property type="project" value="UniProtKB"/>
</dbReference>
<dbReference type="InterPro" id="IPR031697">
    <property type="entry name" value="TMCCDC2"/>
</dbReference>
<dbReference type="PANTHER" id="PTHR38496">
    <property type="entry name" value="TRANSMEMBRANE AND COILED-COIL DOMAIN-CONTAINING PROTEIN 2"/>
    <property type="match status" value="1"/>
</dbReference>
<dbReference type="PANTHER" id="PTHR38496:SF1">
    <property type="entry name" value="TRANSMEMBRANE AND COILED-COIL DOMAIN-CONTAINING PROTEIN 2"/>
    <property type="match status" value="1"/>
</dbReference>
<dbReference type="Pfam" id="PF15844">
    <property type="entry name" value="TMCCDC2"/>
    <property type="match status" value="1"/>
</dbReference>
<proteinExistence type="evidence at protein level"/>
<comment type="interaction">
    <interactant intactId="EBI-12807858">
        <id>Q7Z6W1</id>
    </interactant>
    <interactant intactId="EBI-745535">
        <id>Q8NI60</id>
        <label>COQ8A</label>
    </interactant>
    <organismsDiffer>false</organismsDiffer>
    <experiments>3</experiments>
</comment>
<comment type="interaction">
    <interactant intactId="EBI-12807858">
        <id>Q7Z6W1</id>
    </interactant>
    <interactant intactId="EBI-741171">
        <id>Q96AL5</id>
        <label>PBX3</label>
    </interactant>
    <organismsDiffer>false</organismsDiffer>
    <experiments>3</experiments>
</comment>
<comment type="interaction">
    <interactant intactId="EBI-12807858">
        <id>Q7Z6W1</id>
    </interactant>
    <interactant intactId="EBI-742898">
        <id>P43378</id>
        <label>PTPN9</label>
    </interactant>
    <organismsDiffer>false</organismsDiffer>
    <experiments>3</experiments>
</comment>
<comment type="interaction">
    <interactant intactId="EBI-12807858">
        <id>Q7Z6W1</id>
    </interactant>
    <interactant intactId="EBI-727004">
        <id>O00560</id>
        <label>SDCBP</label>
    </interactant>
    <organismsDiffer>false</organismsDiffer>
    <experiments>3</experiments>
</comment>
<comment type="interaction">
    <interactant intactId="EBI-12807858">
        <id>Q7Z6W1</id>
    </interactant>
    <interactant intactId="EBI-11955057">
        <id>Q8N8B7-2</id>
        <label>TCEANC</label>
    </interactant>
    <organismsDiffer>false</organismsDiffer>
    <experiments>3</experiments>
</comment>
<comment type="interaction">
    <interactant intactId="EBI-12807858">
        <id>Q7Z6W1</id>
    </interactant>
    <interactant intactId="EBI-7353612">
        <id>P57075-2</id>
        <label>UBASH3A</label>
    </interactant>
    <organismsDiffer>false</organismsDiffer>
    <experiments>3</experiments>
</comment>
<comment type="subcellular location">
    <subcellularLocation>
        <location evidence="2">Membrane</location>
        <topology evidence="2">Single-pass membrane protein</topology>
    </subcellularLocation>
</comment>
<keyword id="KW-0175">Coiled coil</keyword>
<keyword id="KW-0472">Membrane</keyword>
<keyword id="KW-1267">Proteomics identification</keyword>
<keyword id="KW-1185">Reference proteome</keyword>
<keyword id="KW-0812">Transmembrane</keyword>
<keyword id="KW-1133">Transmembrane helix</keyword>